<dbReference type="EMBL" id="AY014921">
    <property type="protein sequence ID" value="AAG40480.1"/>
    <property type="molecule type" value="Genomic_DNA"/>
</dbReference>
<dbReference type="SMR" id="Q7HFG0"/>
<dbReference type="GO" id="GO:0005743">
    <property type="term" value="C:mitochondrial inner membrane"/>
    <property type="evidence" value="ECO:0007669"/>
    <property type="project" value="UniProtKB-SubCell"/>
</dbReference>
<dbReference type="GO" id="GO:0045275">
    <property type="term" value="C:respiratory chain complex III"/>
    <property type="evidence" value="ECO:0007669"/>
    <property type="project" value="InterPro"/>
</dbReference>
<dbReference type="GO" id="GO:0046872">
    <property type="term" value="F:metal ion binding"/>
    <property type="evidence" value="ECO:0007669"/>
    <property type="project" value="UniProtKB-KW"/>
</dbReference>
<dbReference type="GO" id="GO:0008121">
    <property type="term" value="F:ubiquinol-cytochrome-c reductase activity"/>
    <property type="evidence" value="ECO:0007669"/>
    <property type="project" value="InterPro"/>
</dbReference>
<dbReference type="GO" id="GO:0006122">
    <property type="term" value="P:mitochondrial electron transport, ubiquinol to cytochrome c"/>
    <property type="evidence" value="ECO:0007669"/>
    <property type="project" value="TreeGrafter"/>
</dbReference>
<dbReference type="CDD" id="cd00290">
    <property type="entry name" value="cytochrome_b_C"/>
    <property type="match status" value="1"/>
</dbReference>
<dbReference type="CDD" id="cd00284">
    <property type="entry name" value="Cytochrome_b_N"/>
    <property type="match status" value="1"/>
</dbReference>
<dbReference type="FunFam" id="1.20.810.10:FF:000002">
    <property type="entry name" value="Cytochrome b"/>
    <property type="match status" value="1"/>
</dbReference>
<dbReference type="Gene3D" id="1.20.810.10">
    <property type="entry name" value="Cytochrome Bc1 Complex, Chain C"/>
    <property type="match status" value="1"/>
</dbReference>
<dbReference type="InterPro" id="IPR005798">
    <property type="entry name" value="Cyt_b/b6_C"/>
</dbReference>
<dbReference type="InterPro" id="IPR036150">
    <property type="entry name" value="Cyt_b/b6_C_sf"/>
</dbReference>
<dbReference type="InterPro" id="IPR005797">
    <property type="entry name" value="Cyt_b/b6_N"/>
</dbReference>
<dbReference type="InterPro" id="IPR027387">
    <property type="entry name" value="Cytb/b6-like_sf"/>
</dbReference>
<dbReference type="InterPro" id="IPR030689">
    <property type="entry name" value="Cytochrome_b"/>
</dbReference>
<dbReference type="InterPro" id="IPR048260">
    <property type="entry name" value="Cytochrome_b_C_euk/bac"/>
</dbReference>
<dbReference type="InterPro" id="IPR048259">
    <property type="entry name" value="Cytochrome_b_N_euk/bac"/>
</dbReference>
<dbReference type="InterPro" id="IPR016174">
    <property type="entry name" value="Di-haem_cyt_TM"/>
</dbReference>
<dbReference type="PANTHER" id="PTHR19271">
    <property type="entry name" value="CYTOCHROME B"/>
    <property type="match status" value="1"/>
</dbReference>
<dbReference type="PANTHER" id="PTHR19271:SF16">
    <property type="entry name" value="CYTOCHROME B"/>
    <property type="match status" value="1"/>
</dbReference>
<dbReference type="Pfam" id="PF00032">
    <property type="entry name" value="Cytochrom_B_C"/>
    <property type="match status" value="1"/>
</dbReference>
<dbReference type="Pfam" id="PF00033">
    <property type="entry name" value="Cytochrome_B"/>
    <property type="match status" value="1"/>
</dbReference>
<dbReference type="PIRSF" id="PIRSF038885">
    <property type="entry name" value="COB"/>
    <property type="match status" value="1"/>
</dbReference>
<dbReference type="SUPFAM" id="SSF81648">
    <property type="entry name" value="a domain/subunit of cytochrome bc1 complex (Ubiquinol-cytochrome c reductase)"/>
    <property type="match status" value="1"/>
</dbReference>
<dbReference type="SUPFAM" id="SSF81342">
    <property type="entry name" value="Transmembrane di-heme cytochromes"/>
    <property type="match status" value="1"/>
</dbReference>
<dbReference type="PROSITE" id="PS51003">
    <property type="entry name" value="CYTB_CTER"/>
    <property type="match status" value="1"/>
</dbReference>
<dbReference type="PROSITE" id="PS51002">
    <property type="entry name" value="CYTB_NTER"/>
    <property type="match status" value="1"/>
</dbReference>
<feature type="chain" id="PRO_0000061576" description="Cytochrome b">
    <location>
        <begin position="1"/>
        <end position="379"/>
    </location>
</feature>
<feature type="transmembrane region" description="Helical" evidence="2">
    <location>
        <begin position="33"/>
        <end position="53"/>
    </location>
</feature>
<feature type="transmembrane region" description="Helical" evidence="2">
    <location>
        <begin position="77"/>
        <end position="98"/>
    </location>
</feature>
<feature type="transmembrane region" description="Helical" evidence="2">
    <location>
        <begin position="113"/>
        <end position="133"/>
    </location>
</feature>
<feature type="transmembrane region" description="Helical" evidence="2">
    <location>
        <begin position="178"/>
        <end position="198"/>
    </location>
</feature>
<feature type="transmembrane region" description="Helical" evidence="2">
    <location>
        <begin position="226"/>
        <end position="246"/>
    </location>
</feature>
<feature type="transmembrane region" description="Helical" evidence="2">
    <location>
        <begin position="288"/>
        <end position="308"/>
    </location>
</feature>
<feature type="transmembrane region" description="Helical" evidence="2">
    <location>
        <begin position="320"/>
        <end position="340"/>
    </location>
</feature>
<feature type="transmembrane region" description="Helical" evidence="2">
    <location>
        <begin position="347"/>
        <end position="367"/>
    </location>
</feature>
<feature type="binding site" description="axial binding residue" evidence="2">
    <location>
        <position position="83"/>
    </location>
    <ligand>
        <name>heme b</name>
        <dbReference type="ChEBI" id="CHEBI:60344"/>
        <label>b562</label>
    </ligand>
    <ligandPart>
        <name>Fe</name>
        <dbReference type="ChEBI" id="CHEBI:18248"/>
    </ligandPart>
</feature>
<feature type="binding site" description="axial binding residue" evidence="2">
    <location>
        <position position="97"/>
    </location>
    <ligand>
        <name>heme b</name>
        <dbReference type="ChEBI" id="CHEBI:60344"/>
        <label>b566</label>
    </ligand>
    <ligandPart>
        <name>Fe</name>
        <dbReference type="ChEBI" id="CHEBI:18248"/>
    </ligandPart>
</feature>
<feature type="binding site" description="axial binding residue" evidence="2">
    <location>
        <position position="182"/>
    </location>
    <ligand>
        <name>heme b</name>
        <dbReference type="ChEBI" id="CHEBI:60344"/>
        <label>b562</label>
    </ligand>
    <ligandPart>
        <name>Fe</name>
        <dbReference type="ChEBI" id="CHEBI:18248"/>
    </ligandPart>
</feature>
<feature type="binding site" description="axial binding residue" evidence="2">
    <location>
        <position position="196"/>
    </location>
    <ligand>
        <name>heme b</name>
        <dbReference type="ChEBI" id="CHEBI:60344"/>
        <label>b566</label>
    </ligand>
    <ligandPart>
        <name>Fe</name>
        <dbReference type="ChEBI" id="CHEBI:18248"/>
    </ligandPart>
</feature>
<feature type="binding site" evidence="2">
    <location>
        <position position="201"/>
    </location>
    <ligand>
        <name>a ubiquinone</name>
        <dbReference type="ChEBI" id="CHEBI:16389"/>
    </ligand>
</feature>
<geneLocation type="mitochondrion"/>
<sequence length="379" mass="42625">MTNLRKTHPLMKIINSSFIDLPAPSNISSWWNFGSLLGICLIVQILTGLFLAMHYTSDTMTAFSSVTHICRDVNYGWLIRYLHANGASMFFICLFLHVGRGLYYGSYMFLETWNIGVLLLFAVMATAFMGYVLPWGQMSFWGATVITNLLSAIPYIGSDLVEWIWGGFSVDKATLTRFFAFHFILPFIIAALAGVHLLFLHETGSNNPSGLCSDADKIPFHPYYTIKDILGVLLLILVLTSLVLFSPDLLGDPDNYTPANPLNTPPHIKPEWYFLFAYAILRSIPNKLGGVLALVLSILVLAVVPFLHTSKQRSMMFRPFSQCLFWILVADLLTLTWIGGQPVEHPFIIIGQLASILYFLLILVLMPITSLFENNLLKW</sequence>
<reference key="1">
    <citation type="journal article" date="2003" name="J. Mammal.">
        <title>Phylogenetic diversification within shrews of the Sorex cinereus group (Soricidae).</title>
        <authorList>
            <person name="Demboski J.R."/>
            <person name="Cook J.A."/>
        </authorList>
    </citation>
    <scope>NUCLEOTIDE SEQUENCE [GENOMIC DNA]</scope>
    <source>
        <strain>Isolate AFTC 7467</strain>
    </source>
</reference>
<gene>
    <name type="primary">MT-CYB</name>
    <name type="synonym">COB</name>
    <name type="synonym">CYTB</name>
    <name type="synonym">MTCYB</name>
</gene>
<evidence type="ECO:0000250" key="1"/>
<evidence type="ECO:0000250" key="2">
    <source>
        <dbReference type="UniProtKB" id="P00157"/>
    </source>
</evidence>
<evidence type="ECO:0000255" key="3">
    <source>
        <dbReference type="PROSITE-ProRule" id="PRU00967"/>
    </source>
</evidence>
<evidence type="ECO:0000255" key="4">
    <source>
        <dbReference type="PROSITE-ProRule" id="PRU00968"/>
    </source>
</evidence>
<organism>
    <name type="scientific">Sorex portenkoi</name>
    <name type="common">Portenko's shrew</name>
    <dbReference type="NCBI Taxonomy" id="144773"/>
    <lineage>
        <taxon>Eukaryota</taxon>
        <taxon>Metazoa</taxon>
        <taxon>Chordata</taxon>
        <taxon>Craniata</taxon>
        <taxon>Vertebrata</taxon>
        <taxon>Euteleostomi</taxon>
        <taxon>Mammalia</taxon>
        <taxon>Eutheria</taxon>
        <taxon>Laurasiatheria</taxon>
        <taxon>Eulipotyphla</taxon>
        <taxon>Soricidae</taxon>
        <taxon>Soricinae</taxon>
        <taxon>Sorex</taxon>
    </lineage>
</organism>
<keyword id="KW-0249">Electron transport</keyword>
<keyword id="KW-0349">Heme</keyword>
<keyword id="KW-0408">Iron</keyword>
<keyword id="KW-0472">Membrane</keyword>
<keyword id="KW-0479">Metal-binding</keyword>
<keyword id="KW-0496">Mitochondrion</keyword>
<keyword id="KW-0999">Mitochondrion inner membrane</keyword>
<keyword id="KW-0679">Respiratory chain</keyword>
<keyword id="KW-0812">Transmembrane</keyword>
<keyword id="KW-1133">Transmembrane helix</keyword>
<keyword id="KW-0813">Transport</keyword>
<keyword id="KW-0830">Ubiquinone</keyword>
<proteinExistence type="inferred from homology"/>
<comment type="function">
    <text evidence="2">Component of the ubiquinol-cytochrome c reductase complex (complex III or cytochrome b-c1 complex) that is part of the mitochondrial respiratory chain. The b-c1 complex mediates electron transfer from ubiquinol to cytochrome c. Contributes to the generation of a proton gradient across the mitochondrial membrane that is then used for ATP synthesis.</text>
</comment>
<comment type="cofactor">
    <cofactor evidence="2">
        <name>heme b</name>
        <dbReference type="ChEBI" id="CHEBI:60344"/>
    </cofactor>
    <text evidence="2">Binds 2 heme b groups non-covalently.</text>
</comment>
<comment type="subunit">
    <text evidence="2">The cytochrome bc1 complex contains 11 subunits: 3 respiratory subunits (MT-CYB, CYC1 and UQCRFS1), 2 core proteins (UQCRC1 and UQCRC2) and 6 low-molecular weight proteins (UQCRH/QCR6, UQCRB/QCR7, UQCRQ/QCR8, UQCR10/QCR9, UQCR11/QCR10 and a cleavage product of UQCRFS1). This cytochrome bc1 complex then forms a dimer.</text>
</comment>
<comment type="subcellular location">
    <subcellularLocation>
        <location evidence="2">Mitochondrion inner membrane</location>
        <topology evidence="2">Multi-pass membrane protein</topology>
    </subcellularLocation>
</comment>
<comment type="miscellaneous">
    <text evidence="1">Heme 1 (or BL or b562) is low-potential and absorbs at about 562 nm, and heme 2 (or BH or b566) is high-potential and absorbs at about 566 nm.</text>
</comment>
<comment type="similarity">
    <text evidence="3 4">Belongs to the cytochrome b family.</text>
</comment>
<comment type="caution">
    <text evidence="2">The full-length protein contains only eight transmembrane helices, not nine as predicted by bioinformatics tools.</text>
</comment>
<protein>
    <recommendedName>
        <fullName>Cytochrome b</fullName>
    </recommendedName>
    <alternativeName>
        <fullName>Complex III subunit 3</fullName>
    </alternativeName>
    <alternativeName>
        <fullName>Complex III subunit III</fullName>
    </alternativeName>
    <alternativeName>
        <fullName>Cytochrome b-c1 complex subunit 3</fullName>
    </alternativeName>
    <alternativeName>
        <fullName>Ubiquinol-cytochrome-c reductase complex cytochrome b subunit</fullName>
    </alternativeName>
</protein>
<name>CYB_SORPO</name>
<accession>Q7HFG0</accession>